<sequence>MTKYIFVTGGVVSSIGKGIVAASLGRLLKNRGLKVTIQKFDPYINIDPGTMSPYQHGEVYVTDDGAETDLDLGHYERFIDINLNKYSNVTTGKIYSEVLRKERKGEYLGATVQVIPHITDALKEKIKRAASTTDSDVIITEVGGTVGDIESLPFLEALRQMKADVGSENVMYIHTTLLPYLKAAGEMKTKPTQHSVKELRGLGIQPNMLVIRTEEPVEQGIKNKLAQFCDVNSEAVIESRDVEHLYQIPLNLQAQSMDQIVCDHLKLNAPQADMTEWSAMVDKVMNLRKTTKIALVGKYVELPDAYLSVVEALKHSGYANDTAIDLKWVNANDVTVDNAADLLGDADGIIVPGGFGQRGTEGKIQAIRYARENDVPMLGICLGMQLTCVEFARHVLNMEGANSFELEPSTKYPIIDIMRDQIDIEDMGGTLRLGLYPCKLKPGSKAAMAYNNQEVVQRRHRHRYEFNNKFRPEFEAAGFVFSGVSPDNRLVEIVELKEKKFFVAAQYHPELQSRPNRPEELYTAFVTAAIKNSN</sequence>
<keyword id="KW-0067">ATP-binding</keyword>
<keyword id="KW-0315">Glutamine amidotransferase</keyword>
<keyword id="KW-0436">Ligase</keyword>
<keyword id="KW-0460">Magnesium</keyword>
<keyword id="KW-0479">Metal-binding</keyword>
<keyword id="KW-0547">Nucleotide-binding</keyword>
<keyword id="KW-0665">Pyrimidine biosynthesis</keyword>
<protein>
    <recommendedName>
        <fullName evidence="1">CTP synthase</fullName>
        <ecNumber evidence="1">6.3.4.2</ecNumber>
    </recommendedName>
    <alternativeName>
        <fullName evidence="1">Cytidine 5'-triphosphate synthase</fullName>
    </alternativeName>
    <alternativeName>
        <fullName evidence="1">Cytidine triphosphate synthetase</fullName>
        <shortName evidence="1">CTP synthetase</shortName>
        <shortName evidence="1">CTPS</shortName>
    </alternativeName>
    <alternativeName>
        <fullName evidence="1">UTP--ammonia ligase</fullName>
    </alternativeName>
</protein>
<comment type="function">
    <text evidence="1">Catalyzes the ATP-dependent amination of UTP to CTP with either L-glutamine or ammonia as the source of nitrogen. Regulates intracellular CTP levels through interactions with the four ribonucleotide triphosphates.</text>
</comment>
<comment type="catalytic activity">
    <reaction evidence="1">
        <text>UTP + L-glutamine + ATP + H2O = CTP + L-glutamate + ADP + phosphate + 2 H(+)</text>
        <dbReference type="Rhea" id="RHEA:26426"/>
        <dbReference type="ChEBI" id="CHEBI:15377"/>
        <dbReference type="ChEBI" id="CHEBI:15378"/>
        <dbReference type="ChEBI" id="CHEBI:29985"/>
        <dbReference type="ChEBI" id="CHEBI:30616"/>
        <dbReference type="ChEBI" id="CHEBI:37563"/>
        <dbReference type="ChEBI" id="CHEBI:43474"/>
        <dbReference type="ChEBI" id="CHEBI:46398"/>
        <dbReference type="ChEBI" id="CHEBI:58359"/>
        <dbReference type="ChEBI" id="CHEBI:456216"/>
        <dbReference type="EC" id="6.3.4.2"/>
    </reaction>
</comment>
<comment type="catalytic activity">
    <reaction evidence="1">
        <text>L-glutamine + H2O = L-glutamate + NH4(+)</text>
        <dbReference type="Rhea" id="RHEA:15889"/>
        <dbReference type="ChEBI" id="CHEBI:15377"/>
        <dbReference type="ChEBI" id="CHEBI:28938"/>
        <dbReference type="ChEBI" id="CHEBI:29985"/>
        <dbReference type="ChEBI" id="CHEBI:58359"/>
    </reaction>
</comment>
<comment type="catalytic activity">
    <reaction evidence="1">
        <text>UTP + NH4(+) + ATP = CTP + ADP + phosphate + 2 H(+)</text>
        <dbReference type="Rhea" id="RHEA:16597"/>
        <dbReference type="ChEBI" id="CHEBI:15378"/>
        <dbReference type="ChEBI" id="CHEBI:28938"/>
        <dbReference type="ChEBI" id="CHEBI:30616"/>
        <dbReference type="ChEBI" id="CHEBI:37563"/>
        <dbReference type="ChEBI" id="CHEBI:43474"/>
        <dbReference type="ChEBI" id="CHEBI:46398"/>
        <dbReference type="ChEBI" id="CHEBI:456216"/>
    </reaction>
</comment>
<comment type="activity regulation">
    <text evidence="1">Allosterically activated by GTP, when glutamine is the substrate; GTP has no effect on the reaction when ammonia is the substrate. The allosteric effector GTP functions by stabilizing the protein conformation that binds the tetrahedral intermediate(s) formed during glutamine hydrolysis. Inhibited by the product CTP, via allosteric rather than competitive inhibition.</text>
</comment>
<comment type="pathway">
    <text evidence="1">Pyrimidine metabolism; CTP biosynthesis via de novo pathway; CTP from UDP: step 2/2.</text>
</comment>
<comment type="subunit">
    <text evidence="1">Homotetramer.</text>
</comment>
<comment type="miscellaneous">
    <text evidence="1">CTPSs have evolved a hybrid strategy for distinguishing between UTP and CTP. The overlapping regions of the product feedback inhibitory and substrate sites recognize a common feature in both compounds, the triphosphate moiety. To differentiate isosteric substrate and product pyrimidine rings, an additional pocket far from the expected kinase/ligase catalytic site, specifically recognizes the cytosine and ribose portions of the product inhibitor.</text>
</comment>
<comment type="similarity">
    <text evidence="1">Belongs to the CTP synthase family.</text>
</comment>
<name>PYRG_STRPC</name>
<dbReference type="EC" id="6.3.4.2" evidence="1"/>
<dbReference type="EMBL" id="CP000259">
    <property type="protein sequence ID" value="ABF32800.1"/>
    <property type="molecule type" value="Genomic_DNA"/>
</dbReference>
<dbReference type="RefSeq" id="WP_002988149.1">
    <property type="nucleotide sequence ID" value="NC_008021.1"/>
</dbReference>
<dbReference type="SMR" id="Q1JK23"/>
<dbReference type="KEGG" id="spk:MGAS9429_Spy1613"/>
<dbReference type="HOGENOM" id="CLU_011675_5_0_9"/>
<dbReference type="UniPathway" id="UPA00159">
    <property type="reaction ID" value="UER00277"/>
</dbReference>
<dbReference type="Proteomes" id="UP000002433">
    <property type="component" value="Chromosome"/>
</dbReference>
<dbReference type="GO" id="GO:0005829">
    <property type="term" value="C:cytosol"/>
    <property type="evidence" value="ECO:0007669"/>
    <property type="project" value="TreeGrafter"/>
</dbReference>
<dbReference type="GO" id="GO:0005524">
    <property type="term" value="F:ATP binding"/>
    <property type="evidence" value="ECO:0007669"/>
    <property type="project" value="UniProtKB-KW"/>
</dbReference>
<dbReference type="GO" id="GO:0003883">
    <property type="term" value="F:CTP synthase activity"/>
    <property type="evidence" value="ECO:0007669"/>
    <property type="project" value="UniProtKB-UniRule"/>
</dbReference>
<dbReference type="GO" id="GO:0004359">
    <property type="term" value="F:glutaminase activity"/>
    <property type="evidence" value="ECO:0007669"/>
    <property type="project" value="RHEA"/>
</dbReference>
<dbReference type="GO" id="GO:0042802">
    <property type="term" value="F:identical protein binding"/>
    <property type="evidence" value="ECO:0007669"/>
    <property type="project" value="TreeGrafter"/>
</dbReference>
<dbReference type="GO" id="GO:0046872">
    <property type="term" value="F:metal ion binding"/>
    <property type="evidence" value="ECO:0007669"/>
    <property type="project" value="UniProtKB-KW"/>
</dbReference>
<dbReference type="GO" id="GO:0044210">
    <property type="term" value="P:'de novo' CTP biosynthetic process"/>
    <property type="evidence" value="ECO:0007669"/>
    <property type="project" value="UniProtKB-UniRule"/>
</dbReference>
<dbReference type="GO" id="GO:0019856">
    <property type="term" value="P:pyrimidine nucleobase biosynthetic process"/>
    <property type="evidence" value="ECO:0007669"/>
    <property type="project" value="TreeGrafter"/>
</dbReference>
<dbReference type="CDD" id="cd03113">
    <property type="entry name" value="CTPS_N"/>
    <property type="match status" value="1"/>
</dbReference>
<dbReference type="CDD" id="cd01746">
    <property type="entry name" value="GATase1_CTP_Synthase"/>
    <property type="match status" value="1"/>
</dbReference>
<dbReference type="FunFam" id="3.40.50.300:FF:000009">
    <property type="entry name" value="CTP synthase"/>
    <property type="match status" value="1"/>
</dbReference>
<dbReference type="FunFam" id="3.40.50.880:FF:000002">
    <property type="entry name" value="CTP synthase"/>
    <property type="match status" value="1"/>
</dbReference>
<dbReference type="Gene3D" id="3.40.50.880">
    <property type="match status" value="1"/>
</dbReference>
<dbReference type="Gene3D" id="3.40.50.300">
    <property type="entry name" value="P-loop containing nucleotide triphosphate hydrolases"/>
    <property type="match status" value="1"/>
</dbReference>
<dbReference type="HAMAP" id="MF_01227">
    <property type="entry name" value="PyrG"/>
    <property type="match status" value="1"/>
</dbReference>
<dbReference type="InterPro" id="IPR029062">
    <property type="entry name" value="Class_I_gatase-like"/>
</dbReference>
<dbReference type="InterPro" id="IPR004468">
    <property type="entry name" value="CTP_synthase"/>
</dbReference>
<dbReference type="InterPro" id="IPR017456">
    <property type="entry name" value="CTP_synthase_N"/>
</dbReference>
<dbReference type="InterPro" id="IPR017926">
    <property type="entry name" value="GATASE"/>
</dbReference>
<dbReference type="InterPro" id="IPR033828">
    <property type="entry name" value="GATase1_CTP_Synthase"/>
</dbReference>
<dbReference type="InterPro" id="IPR027417">
    <property type="entry name" value="P-loop_NTPase"/>
</dbReference>
<dbReference type="NCBIfam" id="NF003792">
    <property type="entry name" value="PRK05380.1"/>
    <property type="match status" value="1"/>
</dbReference>
<dbReference type="NCBIfam" id="TIGR00337">
    <property type="entry name" value="PyrG"/>
    <property type="match status" value="1"/>
</dbReference>
<dbReference type="PANTHER" id="PTHR11550">
    <property type="entry name" value="CTP SYNTHASE"/>
    <property type="match status" value="1"/>
</dbReference>
<dbReference type="PANTHER" id="PTHR11550:SF0">
    <property type="entry name" value="CTP SYNTHASE-RELATED"/>
    <property type="match status" value="1"/>
</dbReference>
<dbReference type="Pfam" id="PF06418">
    <property type="entry name" value="CTP_synth_N"/>
    <property type="match status" value="1"/>
</dbReference>
<dbReference type="Pfam" id="PF00117">
    <property type="entry name" value="GATase"/>
    <property type="match status" value="1"/>
</dbReference>
<dbReference type="SUPFAM" id="SSF52317">
    <property type="entry name" value="Class I glutamine amidotransferase-like"/>
    <property type="match status" value="1"/>
</dbReference>
<dbReference type="SUPFAM" id="SSF52540">
    <property type="entry name" value="P-loop containing nucleoside triphosphate hydrolases"/>
    <property type="match status" value="1"/>
</dbReference>
<dbReference type="PROSITE" id="PS51273">
    <property type="entry name" value="GATASE_TYPE_1"/>
    <property type="match status" value="1"/>
</dbReference>
<accession>Q1JK23</accession>
<gene>
    <name evidence="1" type="primary">pyrG</name>
    <name type="ordered locus">MGAS9429_Spy1613</name>
</gene>
<proteinExistence type="inferred from homology"/>
<feature type="chain" id="PRO_0000266232" description="CTP synthase">
    <location>
        <begin position="1"/>
        <end position="534"/>
    </location>
</feature>
<feature type="domain" description="Glutamine amidotransferase type-1" evidence="1">
    <location>
        <begin position="292"/>
        <end position="534"/>
    </location>
</feature>
<feature type="region of interest" description="Amidoligase domain" evidence="1">
    <location>
        <begin position="1"/>
        <end position="267"/>
    </location>
</feature>
<feature type="active site" description="Nucleophile; for glutamine hydrolysis" evidence="1">
    <location>
        <position position="381"/>
    </location>
</feature>
<feature type="active site" evidence="1">
    <location>
        <position position="508"/>
    </location>
</feature>
<feature type="active site" evidence="1">
    <location>
        <position position="510"/>
    </location>
</feature>
<feature type="binding site" evidence="1">
    <location>
        <position position="13"/>
    </location>
    <ligand>
        <name>CTP</name>
        <dbReference type="ChEBI" id="CHEBI:37563"/>
        <note>allosteric inhibitor</note>
    </ligand>
</feature>
<feature type="binding site" evidence="1">
    <location>
        <position position="13"/>
    </location>
    <ligand>
        <name>UTP</name>
        <dbReference type="ChEBI" id="CHEBI:46398"/>
    </ligand>
</feature>
<feature type="binding site" evidence="1">
    <location>
        <begin position="14"/>
        <end position="19"/>
    </location>
    <ligand>
        <name>ATP</name>
        <dbReference type="ChEBI" id="CHEBI:30616"/>
    </ligand>
</feature>
<feature type="binding site" evidence="1">
    <location>
        <position position="54"/>
    </location>
    <ligand>
        <name>L-glutamine</name>
        <dbReference type="ChEBI" id="CHEBI:58359"/>
    </ligand>
</feature>
<feature type="binding site" evidence="1">
    <location>
        <position position="71"/>
    </location>
    <ligand>
        <name>ATP</name>
        <dbReference type="ChEBI" id="CHEBI:30616"/>
    </ligand>
</feature>
<feature type="binding site" evidence="1">
    <location>
        <position position="71"/>
    </location>
    <ligand>
        <name>Mg(2+)</name>
        <dbReference type="ChEBI" id="CHEBI:18420"/>
    </ligand>
</feature>
<feature type="binding site" evidence="1">
    <location>
        <position position="141"/>
    </location>
    <ligand>
        <name>Mg(2+)</name>
        <dbReference type="ChEBI" id="CHEBI:18420"/>
    </ligand>
</feature>
<feature type="binding site" evidence="1">
    <location>
        <begin position="148"/>
        <end position="150"/>
    </location>
    <ligand>
        <name>CTP</name>
        <dbReference type="ChEBI" id="CHEBI:37563"/>
        <note>allosteric inhibitor</note>
    </ligand>
</feature>
<feature type="binding site" evidence="1">
    <location>
        <begin position="188"/>
        <end position="193"/>
    </location>
    <ligand>
        <name>CTP</name>
        <dbReference type="ChEBI" id="CHEBI:37563"/>
        <note>allosteric inhibitor</note>
    </ligand>
</feature>
<feature type="binding site" evidence="1">
    <location>
        <begin position="188"/>
        <end position="193"/>
    </location>
    <ligand>
        <name>UTP</name>
        <dbReference type="ChEBI" id="CHEBI:46398"/>
    </ligand>
</feature>
<feature type="binding site" evidence="1">
    <location>
        <position position="224"/>
    </location>
    <ligand>
        <name>CTP</name>
        <dbReference type="ChEBI" id="CHEBI:37563"/>
        <note>allosteric inhibitor</note>
    </ligand>
</feature>
<feature type="binding site" evidence="1">
    <location>
        <position position="224"/>
    </location>
    <ligand>
        <name>UTP</name>
        <dbReference type="ChEBI" id="CHEBI:46398"/>
    </ligand>
</feature>
<feature type="binding site" evidence="1">
    <location>
        <begin position="240"/>
        <end position="242"/>
    </location>
    <ligand>
        <name>ATP</name>
        <dbReference type="ChEBI" id="CHEBI:30616"/>
    </ligand>
</feature>
<feature type="binding site" evidence="1">
    <location>
        <position position="354"/>
    </location>
    <ligand>
        <name>L-glutamine</name>
        <dbReference type="ChEBI" id="CHEBI:58359"/>
    </ligand>
</feature>
<feature type="binding site" evidence="1">
    <location>
        <begin position="382"/>
        <end position="385"/>
    </location>
    <ligand>
        <name>L-glutamine</name>
        <dbReference type="ChEBI" id="CHEBI:58359"/>
    </ligand>
</feature>
<feature type="binding site" evidence="1">
    <location>
        <position position="405"/>
    </location>
    <ligand>
        <name>L-glutamine</name>
        <dbReference type="ChEBI" id="CHEBI:58359"/>
    </ligand>
</feature>
<feature type="binding site" evidence="1">
    <location>
        <position position="463"/>
    </location>
    <ligand>
        <name>L-glutamine</name>
        <dbReference type="ChEBI" id="CHEBI:58359"/>
    </ligand>
</feature>
<reference key="1">
    <citation type="journal article" date="2006" name="Proc. Natl. Acad. Sci. U.S.A.">
        <title>Molecular genetic anatomy of inter- and intraserotype variation in the human bacterial pathogen group A Streptococcus.</title>
        <authorList>
            <person name="Beres S.B."/>
            <person name="Richter E.W."/>
            <person name="Nagiec M.J."/>
            <person name="Sumby P."/>
            <person name="Porcella S.F."/>
            <person name="DeLeo F.R."/>
            <person name="Musser J.M."/>
        </authorList>
    </citation>
    <scope>NUCLEOTIDE SEQUENCE [LARGE SCALE GENOMIC DNA]</scope>
    <source>
        <strain>MGAS9429</strain>
    </source>
</reference>
<organism>
    <name type="scientific">Streptococcus pyogenes serotype M12 (strain MGAS9429)</name>
    <dbReference type="NCBI Taxonomy" id="370551"/>
    <lineage>
        <taxon>Bacteria</taxon>
        <taxon>Bacillati</taxon>
        <taxon>Bacillota</taxon>
        <taxon>Bacilli</taxon>
        <taxon>Lactobacillales</taxon>
        <taxon>Streptococcaceae</taxon>
        <taxon>Streptococcus</taxon>
    </lineage>
</organism>
<evidence type="ECO:0000255" key="1">
    <source>
        <dbReference type="HAMAP-Rule" id="MF_01227"/>
    </source>
</evidence>